<gene>
    <name type="ORF">ZK507.1</name>
</gene>
<sequence>MKVNEEGFAIDDKEYAMKTELKFASKHSSRLKIERNVMESYSKCDAQCKEHFSELIDFGQSPVWKWIVMTIVGPSLEELKMKYKPSDIPPSTILQCGLQTMKAIHDFHQIGFLHRDIKPANYCIGYGSKSETIYVLDFGLARKYRLPNGQVRPPRPKTKMIGTPRYCSRASHRCEELGRRDDYESWFFMFIDLVDTTLIDWKGLTRPDAYAKKQELFTKLKTYEKHPMFKVISIYLDNLVYDSEVKFGVLREAITDYARGCKLTLKEPLVWFNQSTCPSPSTAPGTGASRMATNIDLKSIASDRNEENSLDRSKTGTLSFNNSKNKKPSRY</sequence>
<dbReference type="EC" id="2.7.11.1"/>
<dbReference type="EMBL" id="Z29116">
    <property type="protein sequence ID" value="CAA82367.3"/>
    <property type="molecule type" value="Genomic_DNA"/>
</dbReference>
<dbReference type="PIR" id="S40735">
    <property type="entry name" value="S40735"/>
</dbReference>
<dbReference type="RefSeq" id="NP_499015.2">
    <property type="nucleotide sequence ID" value="NM_066614.3"/>
</dbReference>
<dbReference type="SMR" id="P34633"/>
<dbReference type="FunCoup" id="P34633">
    <property type="interactions" value="294"/>
</dbReference>
<dbReference type="STRING" id="6239.ZK507.1.1"/>
<dbReference type="PaxDb" id="6239-ZK507.1"/>
<dbReference type="PeptideAtlas" id="P34633"/>
<dbReference type="EnsemblMetazoa" id="ZK507.1.1">
    <property type="protein sequence ID" value="ZK507.1.1"/>
    <property type="gene ID" value="WBGene00013978"/>
</dbReference>
<dbReference type="GeneID" id="191336"/>
<dbReference type="KEGG" id="cel:CELE_ZK507.1"/>
<dbReference type="UCSC" id="ZK507.1">
    <property type="organism name" value="c. elegans"/>
</dbReference>
<dbReference type="AGR" id="WB:WBGene00013978"/>
<dbReference type="CTD" id="191336"/>
<dbReference type="WormBase" id="ZK507.1">
    <property type="protein sequence ID" value="CE48033"/>
    <property type="gene ID" value="WBGene00013978"/>
</dbReference>
<dbReference type="eggNOG" id="KOG1164">
    <property type="taxonomic scope" value="Eukaryota"/>
</dbReference>
<dbReference type="HOGENOM" id="CLU_019279_2_5_1"/>
<dbReference type="InParanoid" id="P34633"/>
<dbReference type="OrthoDB" id="194358at2759"/>
<dbReference type="PhylomeDB" id="P34633"/>
<dbReference type="PRO" id="PR:P34633"/>
<dbReference type="Proteomes" id="UP000001940">
    <property type="component" value="Chromosome III"/>
</dbReference>
<dbReference type="Bgee" id="WBGene00013978">
    <property type="expression patterns" value="Expressed in adult organism and 2 other cell types or tissues"/>
</dbReference>
<dbReference type="GO" id="GO:0005737">
    <property type="term" value="C:cytoplasm"/>
    <property type="evidence" value="ECO:0000318"/>
    <property type="project" value="GO_Central"/>
</dbReference>
<dbReference type="GO" id="GO:0005634">
    <property type="term" value="C:nucleus"/>
    <property type="evidence" value="ECO:0000318"/>
    <property type="project" value="GO_Central"/>
</dbReference>
<dbReference type="GO" id="GO:0005524">
    <property type="term" value="F:ATP binding"/>
    <property type="evidence" value="ECO:0007669"/>
    <property type="project" value="UniProtKB-KW"/>
</dbReference>
<dbReference type="GO" id="GO:0106310">
    <property type="term" value="F:protein serine kinase activity"/>
    <property type="evidence" value="ECO:0007669"/>
    <property type="project" value="RHEA"/>
</dbReference>
<dbReference type="GO" id="GO:0004674">
    <property type="term" value="F:protein serine/threonine kinase activity"/>
    <property type="evidence" value="ECO:0000318"/>
    <property type="project" value="GO_Central"/>
</dbReference>
<dbReference type="GO" id="GO:0007165">
    <property type="term" value="P:signal transduction"/>
    <property type="evidence" value="ECO:0000318"/>
    <property type="project" value="GO_Central"/>
</dbReference>
<dbReference type="FunFam" id="1.10.510.10:FF:001793">
    <property type="entry name" value="Putative serine/threonine-protein kinase ZK507.1"/>
    <property type="match status" value="1"/>
</dbReference>
<dbReference type="Gene3D" id="1.10.510.10">
    <property type="entry name" value="Transferase(Phosphotransferase) domain 1"/>
    <property type="match status" value="1"/>
</dbReference>
<dbReference type="InterPro" id="IPR050235">
    <property type="entry name" value="CK1_Ser-Thr_kinase"/>
</dbReference>
<dbReference type="InterPro" id="IPR011009">
    <property type="entry name" value="Kinase-like_dom_sf"/>
</dbReference>
<dbReference type="InterPro" id="IPR000719">
    <property type="entry name" value="Prot_kinase_dom"/>
</dbReference>
<dbReference type="InterPro" id="IPR008271">
    <property type="entry name" value="Ser/Thr_kinase_AS"/>
</dbReference>
<dbReference type="PANTHER" id="PTHR11909">
    <property type="entry name" value="CASEIN KINASE-RELATED"/>
    <property type="match status" value="1"/>
</dbReference>
<dbReference type="Pfam" id="PF00069">
    <property type="entry name" value="Pkinase"/>
    <property type="match status" value="1"/>
</dbReference>
<dbReference type="SMART" id="SM00220">
    <property type="entry name" value="S_TKc"/>
    <property type="match status" value="1"/>
</dbReference>
<dbReference type="SUPFAM" id="SSF56112">
    <property type="entry name" value="Protein kinase-like (PK-like)"/>
    <property type="match status" value="1"/>
</dbReference>
<dbReference type="PROSITE" id="PS50011">
    <property type="entry name" value="PROTEIN_KINASE_DOM"/>
    <property type="match status" value="1"/>
</dbReference>
<dbReference type="PROSITE" id="PS00108">
    <property type="entry name" value="PROTEIN_KINASE_ST"/>
    <property type="match status" value="1"/>
</dbReference>
<evidence type="ECO:0000255" key="1">
    <source>
        <dbReference type="PROSITE-ProRule" id="PRU00159"/>
    </source>
</evidence>
<evidence type="ECO:0000255" key="2">
    <source>
        <dbReference type="PROSITE-ProRule" id="PRU10027"/>
    </source>
</evidence>
<evidence type="ECO:0000256" key="3">
    <source>
        <dbReference type="SAM" id="MobiDB-lite"/>
    </source>
</evidence>
<name>YOO1_CAEEL</name>
<reference key="1">
    <citation type="journal article" date="1994" name="Nature">
        <title>2.2 Mb of contiguous nucleotide sequence from chromosome III of C. elegans.</title>
        <authorList>
            <person name="Wilson R."/>
            <person name="Ainscough R."/>
            <person name="Anderson K."/>
            <person name="Baynes C."/>
            <person name="Berks M."/>
            <person name="Bonfield J."/>
            <person name="Burton J."/>
            <person name="Connell M."/>
            <person name="Copsey T."/>
            <person name="Cooper J."/>
            <person name="Coulson A."/>
            <person name="Craxton M."/>
            <person name="Dear S."/>
            <person name="Du Z."/>
            <person name="Durbin R."/>
            <person name="Favello A."/>
            <person name="Fraser A."/>
            <person name="Fulton L."/>
            <person name="Gardner A."/>
            <person name="Green P."/>
            <person name="Hawkins T."/>
            <person name="Hillier L."/>
            <person name="Jier M."/>
            <person name="Johnston L."/>
            <person name="Jones M."/>
            <person name="Kershaw J."/>
            <person name="Kirsten J."/>
            <person name="Laisster N."/>
            <person name="Latreille P."/>
            <person name="Lightning J."/>
            <person name="Lloyd C."/>
            <person name="Mortimore B."/>
            <person name="O'Callaghan M."/>
            <person name="Parsons J."/>
            <person name="Percy C."/>
            <person name="Rifken L."/>
            <person name="Roopra A."/>
            <person name="Saunders D."/>
            <person name="Shownkeen R."/>
            <person name="Sims M."/>
            <person name="Smaldon N."/>
            <person name="Smith A."/>
            <person name="Smith M."/>
            <person name="Sonnhammer E."/>
            <person name="Staden R."/>
            <person name="Sulston J."/>
            <person name="Thierry-Mieg J."/>
            <person name="Thomas K."/>
            <person name="Vaudin M."/>
            <person name="Vaughan K."/>
            <person name="Waterston R."/>
            <person name="Watson A."/>
            <person name="Weinstock L."/>
            <person name="Wilkinson-Sproat J."/>
            <person name="Wohldman P."/>
        </authorList>
    </citation>
    <scope>NUCLEOTIDE SEQUENCE [LARGE SCALE GENOMIC DNA]</scope>
    <source>
        <strain>Bristol N2</strain>
    </source>
</reference>
<reference key="2">
    <citation type="journal article" date="1998" name="Science">
        <title>Genome sequence of the nematode C. elegans: a platform for investigating biology.</title>
        <authorList>
            <consortium name="The C. elegans sequencing consortium"/>
        </authorList>
    </citation>
    <scope>NUCLEOTIDE SEQUENCE [LARGE SCALE GENOMIC DNA]</scope>
    <source>
        <strain>Bristol N2</strain>
    </source>
</reference>
<protein>
    <recommendedName>
        <fullName>Putative serine/threonine-protein kinase ZK507.1</fullName>
        <ecNumber>2.7.11.1</ecNumber>
    </recommendedName>
</protein>
<organism>
    <name type="scientific">Caenorhabditis elegans</name>
    <dbReference type="NCBI Taxonomy" id="6239"/>
    <lineage>
        <taxon>Eukaryota</taxon>
        <taxon>Metazoa</taxon>
        <taxon>Ecdysozoa</taxon>
        <taxon>Nematoda</taxon>
        <taxon>Chromadorea</taxon>
        <taxon>Rhabditida</taxon>
        <taxon>Rhabditina</taxon>
        <taxon>Rhabditomorpha</taxon>
        <taxon>Rhabditoidea</taxon>
        <taxon>Rhabditidae</taxon>
        <taxon>Peloderinae</taxon>
        <taxon>Caenorhabditis</taxon>
    </lineage>
</organism>
<accession>P34633</accession>
<comment type="catalytic activity">
    <reaction>
        <text>L-seryl-[protein] + ATP = O-phospho-L-seryl-[protein] + ADP + H(+)</text>
        <dbReference type="Rhea" id="RHEA:17989"/>
        <dbReference type="Rhea" id="RHEA-COMP:9863"/>
        <dbReference type="Rhea" id="RHEA-COMP:11604"/>
        <dbReference type="ChEBI" id="CHEBI:15378"/>
        <dbReference type="ChEBI" id="CHEBI:29999"/>
        <dbReference type="ChEBI" id="CHEBI:30616"/>
        <dbReference type="ChEBI" id="CHEBI:83421"/>
        <dbReference type="ChEBI" id="CHEBI:456216"/>
        <dbReference type="EC" id="2.7.11.1"/>
    </reaction>
</comment>
<comment type="catalytic activity">
    <reaction>
        <text>L-threonyl-[protein] + ATP = O-phospho-L-threonyl-[protein] + ADP + H(+)</text>
        <dbReference type="Rhea" id="RHEA:46608"/>
        <dbReference type="Rhea" id="RHEA-COMP:11060"/>
        <dbReference type="Rhea" id="RHEA-COMP:11605"/>
        <dbReference type="ChEBI" id="CHEBI:15378"/>
        <dbReference type="ChEBI" id="CHEBI:30013"/>
        <dbReference type="ChEBI" id="CHEBI:30616"/>
        <dbReference type="ChEBI" id="CHEBI:61977"/>
        <dbReference type="ChEBI" id="CHEBI:456216"/>
        <dbReference type="EC" id="2.7.11.1"/>
    </reaction>
</comment>
<comment type="similarity">
    <text evidence="1">Belongs to the protein kinase superfamily. Ser/Thr protein kinase family.</text>
</comment>
<proteinExistence type="inferred from homology"/>
<keyword id="KW-0067">ATP-binding</keyword>
<keyword id="KW-0418">Kinase</keyword>
<keyword id="KW-0547">Nucleotide-binding</keyword>
<keyword id="KW-1185">Reference proteome</keyword>
<keyword id="KW-0723">Serine/threonine-protein kinase</keyword>
<keyword id="KW-0808">Transferase</keyword>
<feature type="chain" id="PRO_0000086832" description="Putative serine/threonine-protein kinase ZK507.1">
    <location>
        <begin position="1"/>
        <end position="331"/>
    </location>
</feature>
<feature type="domain" description="Protein kinase" evidence="1">
    <location>
        <begin position="1"/>
        <end position="270"/>
    </location>
</feature>
<feature type="region of interest" description="Disordered" evidence="3">
    <location>
        <begin position="302"/>
        <end position="331"/>
    </location>
</feature>
<feature type="compositionally biased region" description="Basic and acidic residues" evidence="3">
    <location>
        <begin position="302"/>
        <end position="314"/>
    </location>
</feature>
<feature type="active site" description="Proton acceptor" evidence="1 2">
    <location>
        <position position="116"/>
    </location>
</feature>